<reference key="1">
    <citation type="submission" date="2008-02" db="EMBL/GenBank/DDBJ databases">
        <title>Complete sequence of Shewanella woodyi ATCC 51908.</title>
        <authorList>
            <consortium name="US DOE Joint Genome Institute"/>
            <person name="Copeland A."/>
            <person name="Lucas S."/>
            <person name="Lapidus A."/>
            <person name="Glavina del Rio T."/>
            <person name="Dalin E."/>
            <person name="Tice H."/>
            <person name="Bruce D."/>
            <person name="Goodwin L."/>
            <person name="Pitluck S."/>
            <person name="Sims D."/>
            <person name="Brettin T."/>
            <person name="Detter J.C."/>
            <person name="Han C."/>
            <person name="Kuske C.R."/>
            <person name="Schmutz J."/>
            <person name="Larimer F."/>
            <person name="Land M."/>
            <person name="Hauser L."/>
            <person name="Kyrpides N."/>
            <person name="Lykidis A."/>
            <person name="Zhao J.-S."/>
            <person name="Richardson P."/>
        </authorList>
    </citation>
    <scope>NUCLEOTIDE SEQUENCE [LARGE SCALE GENOMIC DNA]</scope>
    <source>
        <strain>ATCC 51908 / MS32</strain>
    </source>
</reference>
<comment type="function">
    <text evidence="1">Catalyzes a salvage reaction resulting in the formation of AMP, that is energically less costly than de novo synthesis.</text>
</comment>
<comment type="catalytic activity">
    <reaction evidence="1">
        <text>AMP + diphosphate = 5-phospho-alpha-D-ribose 1-diphosphate + adenine</text>
        <dbReference type="Rhea" id="RHEA:16609"/>
        <dbReference type="ChEBI" id="CHEBI:16708"/>
        <dbReference type="ChEBI" id="CHEBI:33019"/>
        <dbReference type="ChEBI" id="CHEBI:58017"/>
        <dbReference type="ChEBI" id="CHEBI:456215"/>
        <dbReference type="EC" id="2.4.2.7"/>
    </reaction>
</comment>
<comment type="pathway">
    <text evidence="1">Purine metabolism; AMP biosynthesis via salvage pathway; AMP from adenine: step 1/1.</text>
</comment>
<comment type="subunit">
    <text evidence="1">Homodimer.</text>
</comment>
<comment type="subcellular location">
    <subcellularLocation>
        <location evidence="1">Cytoplasm</location>
    </subcellularLocation>
</comment>
<comment type="similarity">
    <text evidence="1">Belongs to the purine/pyrimidine phosphoribosyltransferase family.</text>
</comment>
<accession>B1KNJ9</accession>
<evidence type="ECO:0000255" key="1">
    <source>
        <dbReference type="HAMAP-Rule" id="MF_00004"/>
    </source>
</evidence>
<proteinExistence type="inferred from homology"/>
<organism>
    <name type="scientific">Shewanella woodyi (strain ATCC 51908 / MS32)</name>
    <dbReference type="NCBI Taxonomy" id="392500"/>
    <lineage>
        <taxon>Bacteria</taxon>
        <taxon>Pseudomonadati</taxon>
        <taxon>Pseudomonadota</taxon>
        <taxon>Gammaproteobacteria</taxon>
        <taxon>Alteromonadales</taxon>
        <taxon>Shewanellaceae</taxon>
        <taxon>Shewanella</taxon>
    </lineage>
</organism>
<sequence length="181" mass="19931">MNNDSLAIIKQSIKTIPDYPKPGILFRDVTSLLEDHTAYKATMDILVQHYKDHGFTKIVGTEARGFLFGAPLALELGVGFVPVRKPGKLPRETISESYELEYGHDVLELHTDAINENDKVLVVDDLLATGGTIEATVKLIRKLGGEVKHAAFVISLPDLGGAKRLEEMDLELVTLCEFEGE</sequence>
<name>APT_SHEWM</name>
<dbReference type="EC" id="2.4.2.7" evidence="1"/>
<dbReference type="EMBL" id="CP000961">
    <property type="protein sequence ID" value="ACA86076.1"/>
    <property type="molecule type" value="Genomic_DNA"/>
</dbReference>
<dbReference type="RefSeq" id="WP_012324422.1">
    <property type="nucleotide sequence ID" value="NC_010506.1"/>
</dbReference>
<dbReference type="SMR" id="B1KNJ9"/>
<dbReference type="STRING" id="392500.Swoo_1792"/>
<dbReference type="KEGG" id="swd:Swoo_1792"/>
<dbReference type="eggNOG" id="COG0503">
    <property type="taxonomic scope" value="Bacteria"/>
</dbReference>
<dbReference type="HOGENOM" id="CLU_063339_3_0_6"/>
<dbReference type="UniPathway" id="UPA00588">
    <property type="reaction ID" value="UER00646"/>
</dbReference>
<dbReference type="Proteomes" id="UP000002168">
    <property type="component" value="Chromosome"/>
</dbReference>
<dbReference type="GO" id="GO:0005737">
    <property type="term" value="C:cytoplasm"/>
    <property type="evidence" value="ECO:0007669"/>
    <property type="project" value="UniProtKB-SubCell"/>
</dbReference>
<dbReference type="GO" id="GO:0002055">
    <property type="term" value="F:adenine binding"/>
    <property type="evidence" value="ECO:0007669"/>
    <property type="project" value="TreeGrafter"/>
</dbReference>
<dbReference type="GO" id="GO:0003999">
    <property type="term" value="F:adenine phosphoribosyltransferase activity"/>
    <property type="evidence" value="ECO:0007669"/>
    <property type="project" value="UniProtKB-UniRule"/>
</dbReference>
<dbReference type="GO" id="GO:0016208">
    <property type="term" value="F:AMP binding"/>
    <property type="evidence" value="ECO:0007669"/>
    <property type="project" value="TreeGrafter"/>
</dbReference>
<dbReference type="GO" id="GO:0006168">
    <property type="term" value="P:adenine salvage"/>
    <property type="evidence" value="ECO:0007669"/>
    <property type="project" value="InterPro"/>
</dbReference>
<dbReference type="GO" id="GO:0044209">
    <property type="term" value="P:AMP salvage"/>
    <property type="evidence" value="ECO:0007669"/>
    <property type="project" value="UniProtKB-UniRule"/>
</dbReference>
<dbReference type="GO" id="GO:0006166">
    <property type="term" value="P:purine ribonucleoside salvage"/>
    <property type="evidence" value="ECO:0007669"/>
    <property type="project" value="UniProtKB-KW"/>
</dbReference>
<dbReference type="CDD" id="cd06223">
    <property type="entry name" value="PRTases_typeI"/>
    <property type="match status" value="1"/>
</dbReference>
<dbReference type="FunFam" id="3.40.50.2020:FF:000004">
    <property type="entry name" value="Adenine phosphoribosyltransferase"/>
    <property type="match status" value="1"/>
</dbReference>
<dbReference type="Gene3D" id="3.40.50.2020">
    <property type="match status" value="1"/>
</dbReference>
<dbReference type="HAMAP" id="MF_00004">
    <property type="entry name" value="Aden_phosphoribosyltr"/>
    <property type="match status" value="1"/>
</dbReference>
<dbReference type="InterPro" id="IPR005764">
    <property type="entry name" value="Ade_phspho_trans"/>
</dbReference>
<dbReference type="InterPro" id="IPR000836">
    <property type="entry name" value="PRibTrfase_dom"/>
</dbReference>
<dbReference type="InterPro" id="IPR029057">
    <property type="entry name" value="PRTase-like"/>
</dbReference>
<dbReference type="InterPro" id="IPR050054">
    <property type="entry name" value="UPRTase/APRTase"/>
</dbReference>
<dbReference type="NCBIfam" id="TIGR01090">
    <property type="entry name" value="apt"/>
    <property type="match status" value="1"/>
</dbReference>
<dbReference type="NCBIfam" id="NF002632">
    <property type="entry name" value="PRK02304.1-1"/>
    <property type="match status" value="1"/>
</dbReference>
<dbReference type="NCBIfam" id="NF002633">
    <property type="entry name" value="PRK02304.1-2"/>
    <property type="match status" value="1"/>
</dbReference>
<dbReference type="NCBIfam" id="NF002634">
    <property type="entry name" value="PRK02304.1-3"/>
    <property type="match status" value="1"/>
</dbReference>
<dbReference type="NCBIfam" id="NF002636">
    <property type="entry name" value="PRK02304.1-5"/>
    <property type="match status" value="1"/>
</dbReference>
<dbReference type="PANTHER" id="PTHR32315">
    <property type="entry name" value="ADENINE PHOSPHORIBOSYLTRANSFERASE"/>
    <property type="match status" value="1"/>
</dbReference>
<dbReference type="PANTHER" id="PTHR32315:SF3">
    <property type="entry name" value="ADENINE PHOSPHORIBOSYLTRANSFERASE"/>
    <property type="match status" value="1"/>
</dbReference>
<dbReference type="Pfam" id="PF00156">
    <property type="entry name" value="Pribosyltran"/>
    <property type="match status" value="1"/>
</dbReference>
<dbReference type="SUPFAM" id="SSF53271">
    <property type="entry name" value="PRTase-like"/>
    <property type="match status" value="1"/>
</dbReference>
<dbReference type="PROSITE" id="PS00103">
    <property type="entry name" value="PUR_PYR_PR_TRANSFER"/>
    <property type="match status" value="1"/>
</dbReference>
<feature type="chain" id="PRO_1000089006" description="Adenine phosphoribosyltransferase">
    <location>
        <begin position="1"/>
        <end position="181"/>
    </location>
</feature>
<keyword id="KW-0963">Cytoplasm</keyword>
<keyword id="KW-0328">Glycosyltransferase</keyword>
<keyword id="KW-0660">Purine salvage</keyword>
<keyword id="KW-1185">Reference proteome</keyword>
<keyword id="KW-0808">Transferase</keyword>
<gene>
    <name evidence="1" type="primary">apt</name>
    <name type="ordered locus">Swoo_1792</name>
</gene>
<protein>
    <recommendedName>
        <fullName evidence="1">Adenine phosphoribosyltransferase</fullName>
        <shortName evidence="1">APRT</shortName>
        <ecNumber evidence="1">2.4.2.7</ecNumber>
    </recommendedName>
</protein>